<reference key="1">
    <citation type="journal article" date="2004" name="Science">
        <title>The genomic sequence of the accidental pathogen Legionella pneumophila.</title>
        <authorList>
            <person name="Chien M."/>
            <person name="Morozova I."/>
            <person name="Shi S."/>
            <person name="Sheng H."/>
            <person name="Chen J."/>
            <person name="Gomez S.M."/>
            <person name="Asamani G."/>
            <person name="Hill K."/>
            <person name="Nuara J."/>
            <person name="Feder M."/>
            <person name="Rineer J."/>
            <person name="Greenberg J.J."/>
            <person name="Steshenko V."/>
            <person name="Park S.H."/>
            <person name="Zhao B."/>
            <person name="Teplitskaya E."/>
            <person name="Edwards J.R."/>
            <person name="Pampou S."/>
            <person name="Georghiou A."/>
            <person name="Chou I.-C."/>
            <person name="Iannuccilli W."/>
            <person name="Ulz M.E."/>
            <person name="Kim D.H."/>
            <person name="Geringer-Sameth A."/>
            <person name="Goldsberry C."/>
            <person name="Morozov P."/>
            <person name="Fischer S.G."/>
            <person name="Segal G."/>
            <person name="Qu X."/>
            <person name="Rzhetsky A."/>
            <person name="Zhang P."/>
            <person name="Cayanis E."/>
            <person name="De Jong P.J."/>
            <person name="Ju J."/>
            <person name="Kalachikov S."/>
            <person name="Shuman H.A."/>
            <person name="Russo J.J."/>
        </authorList>
    </citation>
    <scope>NUCLEOTIDE SEQUENCE [LARGE SCALE GENOMIC DNA]</scope>
    <source>
        <strain>Philadelphia 1 / ATCC 33152 / DSM 7513</strain>
    </source>
</reference>
<protein>
    <recommendedName>
        <fullName evidence="1">Translation initiation factor IF-1</fullName>
    </recommendedName>
</protein>
<gene>
    <name evidence="1" type="primary">infA</name>
    <name type="ordered locus">lpg1770</name>
</gene>
<accession>Q5ZUM3</accession>
<evidence type="ECO:0000255" key="1">
    <source>
        <dbReference type="HAMAP-Rule" id="MF_00075"/>
    </source>
</evidence>
<organism>
    <name type="scientific">Legionella pneumophila subsp. pneumophila (strain Philadelphia 1 / ATCC 33152 / DSM 7513)</name>
    <dbReference type="NCBI Taxonomy" id="272624"/>
    <lineage>
        <taxon>Bacteria</taxon>
        <taxon>Pseudomonadati</taxon>
        <taxon>Pseudomonadota</taxon>
        <taxon>Gammaproteobacteria</taxon>
        <taxon>Legionellales</taxon>
        <taxon>Legionellaceae</taxon>
        <taxon>Legionella</taxon>
    </lineage>
</organism>
<sequence length="73" mass="8342">MAKEDHIEMAGTVIDTLPNTMFRVELENGHIVTAHISGRMRKNYIRILTGDKVKVELTPYDLSKGRIIFRDKG</sequence>
<keyword id="KW-0963">Cytoplasm</keyword>
<keyword id="KW-0396">Initiation factor</keyword>
<keyword id="KW-0648">Protein biosynthesis</keyword>
<keyword id="KW-1185">Reference proteome</keyword>
<keyword id="KW-0694">RNA-binding</keyword>
<keyword id="KW-0699">rRNA-binding</keyword>
<comment type="function">
    <text evidence="1">One of the essential components for the initiation of protein synthesis. Stabilizes the binding of IF-2 and IF-3 on the 30S subunit to which N-formylmethionyl-tRNA(fMet) subsequently binds. Helps modulate mRNA selection, yielding the 30S pre-initiation complex (PIC). Upon addition of the 50S ribosomal subunit IF-1, IF-2 and IF-3 are released leaving the mature 70S translation initiation complex.</text>
</comment>
<comment type="subunit">
    <text evidence="1">Component of the 30S ribosomal translation pre-initiation complex which assembles on the 30S ribosome in the order IF-2 and IF-3, IF-1 and N-formylmethionyl-tRNA(fMet); mRNA recruitment can occur at any time during PIC assembly.</text>
</comment>
<comment type="subcellular location">
    <subcellularLocation>
        <location evidence="1">Cytoplasm</location>
    </subcellularLocation>
</comment>
<comment type="similarity">
    <text evidence="1">Belongs to the IF-1 family.</text>
</comment>
<name>IF1_LEGPH</name>
<dbReference type="EMBL" id="AE017354">
    <property type="protein sequence ID" value="AAU27849.1"/>
    <property type="molecule type" value="Genomic_DNA"/>
</dbReference>
<dbReference type="RefSeq" id="WP_010947496.1">
    <property type="nucleotide sequence ID" value="NC_002942.5"/>
</dbReference>
<dbReference type="RefSeq" id="YP_095796.1">
    <property type="nucleotide sequence ID" value="NC_002942.5"/>
</dbReference>
<dbReference type="SMR" id="Q5ZUM3"/>
<dbReference type="STRING" id="272624.lpg1770"/>
<dbReference type="PaxDb" id="272624-lpg1770"/>
<dbReference type="GeneID" id="57035759"/>
<dbReference type="KEGG" id="lpn:lpg1770"/>
<dbReference type="PATRIC" id="fig|272624.6.peg.1855"/>
<dbReference type="eggNOG" id="COG0361">
    <property type="taxonomic scope" value="Bacteria"/>
</dbReference>
<dbReference type="HOGENOM" id="CLU_151267_1_0_6"/>
<dbReference type="OrthoDB" id="9803250at2"/>
<dbReference type="Proteomes" id="UP000000609">
    <property type="component" value="Chromosome"/>
</dbReference>
<dbReference type="GO" id="GO:0005829">
    <property type="term" value="C:cytosol"/>
    <property type="evidence" value="ECO:0007669"/>
    <property type="project" value="TreeGrafter"/>
</dbReference>
<dbReference type="GO" id="GO:0043022">
    <property type="term" value="F:ribosome binding"/>
    <property type="evidence" value="ECO:0007669"/>
    <property type="project" value="UniProtKB-UniRule"/>
</dbReference>
<dbReference type="GO" id="GO:0019843">
    <property type="term" value="F:rRNA binding"/>
    <property type="evidence" value="ECO:0007669"/>
    <property type="project" value="UniProtKB-UniRule"/>
</dbReference>
<dbReference type="GO" id="GO:0003743">
    <property type="term" value="F:translation initiation factor activity"/>
    <property type="evidence" value="ECO:0007669"/>
    <property type="project" value="UniProtKB-UniRule"/>
</dbReference>
<dbReference type="CDD" id="cd04451">
    <property type="entry name" value="S1_IF1"/>
    <property type="match status" value="1"/>
</dbReference>
<dbReference type="FunFam" id="2.40.50.140:FF:000002">
    <property type="entry name" value="Translation initiation factor IF-1"/>
    <property type="match status" value="1"/>
</dbReference>
<dbReference type="Gene3D" id="2.40.50.140">
    <property type="entry name" value="Nucleic acid-binding proteins"/>
    <property type="match status" value="1"/>
</dbReference>
<dbReference type="HAMAP" id="MF_00075">
    <property type="entry name" value="IF_1"/>
    <property type="match status" value="1"/>
</dbReference>
<dbReference type="InterPro" id="IPR012340">
    <property type="entry name" value="NA-bd_OB-fold"/>
</dbReference>
<dbReference type="InterPro" id="IPR006196">
    <property type="entry name" value="RNA-binding_domain_S1_IF1"/>
</dbReference>
<dbReference type="InterPro" id="IPR003029">
    <property type="entry name" value="S1_domain"/>
</dbReference>
<dbReference type="InterPro" id="IPR004368">
    <property type="entry name" value="TIF_IF1"/>
</dbReference>
<dbReference type="NCBIfam" id="TIGR00008">
    <property type="entry name" value="infA"/>
    <property type="match status" value="1"/>
</dbReference>
<dbReference type="PANTHER" id="PTHR33370">
    <property type="entry name" value="TRANSLATION INITIATION FACTOR IF-1, CHLOROPLASTIC"/>
    <property type="match status" value="1"/>
</dbReference>
<dbReference type="PANTHER" id="PTHR33370:SF1">
    <property type="entry name" value="TRANSLATION INITIATION FACTOR IF-1, CHLOROPLASTIC"/>
    <property type="match status" value="1"/>
</dbReference>
<dbReference type="Pfam" id="PF01176">
    <property type="entry name" value="eIF-1a"/>
    <property type="match status" value="1"/>
</dbReference>
<dbReference type="SMART" id="SM00316">
    <property type="entry name" value="S1"/>
    <property type="match status" value="1"/>
</dbReference>
<dbReference type="SUPFAM" id="SSF50249">
    <property type="entry name" value="Nucleic acid-binding proteins"/>
    <property type="match status" value="1"/>
</dbReference>
<dbReference type="PROSITE" id="PS50832">
    <property type="entry name" value="S1_IF1_TYPE"/>
    <property type="match status" value="1"/>
</dbReference>
<proteinExistence type="inferred from homology"/>
<feature type="chain" id="PRO_0000095808" description="Translation initiation factor IF-1">
    <location>
        <begin position="1"/>
        <end position="73"/>
    </location>
</feature>
<feature type="domain" description="S1-like" evidence="1">
    <location>
        <begin position="1"/>
        <end position="72"/>
    </location>
</feature>